<protein>
    <recommendedName>
        <fullName evidence="1">Protein Smg homolog</fullName>
    </recommendedName>
</protein>
<feature type="chain" id="PRO_1000082452" description="Protein Smg homolog">
    <location>
        <begin position="1"/>
        <end position="157"/>
    </location>
</feature>
<proteinExistence type="inferred from homology"/>
<comment type="similarity">
    <text evidence="1">Belongs to the Smg family.</text>
</comment>
<gene>
    <name evidence="1" type="primary">smg</name>
    <name type="ordered locus">Ssed_0038</name>
</gene>
<name>SMG_SHESH</name>
<keyword id="KW-1185">Reference proteome</keyword>
<organism>
    <name type="scientific">Shewanella sediminis (strain HAW-EB3)</name>
    <dbReference type="NCBI Taxonomy" id="425104"/>
    <lineage>
        <taxon>Bacteria</taxon>
        <taxon>Pseudomonadati</taxon>
        <taxon>Pseudomonadota</taxon>
        <taxon>Gammaproteobacteria</taxon>
        <taxon>Alteromonadales</taxon>
        <taxon>Shewanellaceae</taxon>
        <taxon>Shewanella</taxon>
    </lineage>
</organism>
<sequence>MFDILMYLFENYVHSEVEFLVDEDELTQELTRAGFHQSEIIKALSWLENLAELQEGDTPYLCDHDQHSFRIYTQKEMDKLDVECRGFLLFLEQIKVLSVETREMVIDRVMELDETALILEDLKWVVLMVLFNAPGNESAYEQMEDLIFEQPDGRLHS</sequence>
<dbReference type="EMBL" id="CP000821">
    <property type="protein sequence ID" value="ABV34651.1"/>
    <property type="molecule type" value="Genomic_DNA"/>
</dbReference>
<dbReference type="RefSeq" id="WP_012004177.1">
    <property type="nucleotide sequence ID" value="NC_009831.1"/>
</dbReference>
<dbReference type="SMR" id="A8FP78"/>
<dbReference type="STRING" id="425104.Ssed_0038"/>
<dbReference type="KEGG" id="sse:Ssed_0038"/>
<dbReference type="eggNOG" id="COG2922">
    <property type="taxonomic scope" value="Bacteria"/>
</dbReference>
<dbReference type="HOGENOM" id="CLU_133242_0_0_6"/>
<dbReference type="OrthoDB" id="9788984at2"/>
<dbReference type="Proteomes" id="UP000002015">
    <property type="component" value="Chromosome"/>
</dbReference>
<dbReference type="HAMAP" id="MF_00598">
    <property type="entry name" value="Smg"/>
    <property type="match status" value="1"/>
</dbReference>
<dbReference type="InterPro" id="IPR007456">
    <property type="entry name" value="Smg"/>
</dbReference>
<dbReference type="NCBIfam" id="NF002897">
    <property type="entry name" value="PRK03430.1"/>
    <property type="match status" value="1"/>
</dbReference>
<dbReference type="PANTHER" id="PTHR38692">
    <property type="entry name" value="PROTEIN SMG"/>
    <property type="match status" value="1"/>
</dbReference>
<dbReference type="PANTHER" id="PTHR38692:SF1">
    <property type="entry name" value="PROTEIN SMG"/>
    <property type="match status" value="1"/>
</dbReference>
<dbReference type="Pfam" id="PF04361">
    <property type="entry name" value="DUF494"/>
    <property type="match status" value="1"/>
</dbReference>
<reference key="1">
    <citation type="submission" date="2007-08" db="EMBL/GenBank/DDBJ databases">
        <title>Complete sequence of Shewanella sediminis HAW-EB3.</title>
        <authorList>
            <consortium name="US DOE Joint Genome Institute"/>
            <person name="Copeland A."/>
            <person name="Lucas S."/>
            <person name="Lapidus A."/>
            <person name="Barry K."/>
            <person name="Glavina del Rio T."/>
            <person name="Dalin E."/>
            <person name="Tice H."/>
            <person name="Pitluck S."/>
            <person name="Chertkov O."/>
            <person name="Brettin T."/>
            <person name="Bruce D."/>
            <person name="Detter J.C."/>
            <person name="Han C."/>
            <person name="Schmutz J."/>
            <person name="Larimer F."/>
            <person name="Land M."/>
            <person name="Hauser L."/>
            <person name="Kyrpides N."/>
            <person name="Kim E."/>
            <person name="Zhao J.-S."/>
            <person name="Richardson P."/>
        </authorList>
    </citation>
    <scope>NUCLEOTIDE SEQUENCE [LARGE SCALE GENOMIC DNA]</scope>
    <source>
        <strain>HAW-EB3</strain>
    </source>
</reference>
<evidence type="ECO:0000255" key="1">
    <source>
        <dbReference type="HAMAP-Rule" id="MF_00598"/>
    </source>
</evidence>
<accession>A8FP78</accession>